<reference key="1">
    <citation type="submission" date="2003-06" db="EMBL/GenBank/DDBJ databases">
        <authorList>
            <consortium name="NIH - Xenopus Gene Collection (XGC) project"/>
        </authorList>
    </citation>
    <scope>NUCLEOTIDE SEQUENCE [LARGE SCALE MRNA]</scope>
</reference>
<sequence>MGAVTDDEVIRKRLLIDGDGAGDDRRINLLVKSFVKWCNSGSQEEGYSQYQRMLSSLSQCEYSMGKTLLVHDMNLREMENYEKIYVDIESSIAAAHEKIAECKKQILQAKRIRKNRQEYDALAKVIEQHPDRHETLKQLEALDKELKQLSHTKENAEDKLELRRKQFHVLLSTIHELQQTLENDDKLAEESQESPMETQNP</sequence>
<proteinExistence type="evidence at transcript level"/>
<feature type="chain" id="PRO_0000310757" description="THO complex subunit 7 homolog">
    <location>
        <begin position="1"/>
        <end position="201"/>
    </location>
</feature>
<feature type="region of interest" description="Disordered" evidence="3">
    <location>
        <begin position="182"/>
        <end position="201"/>
    </location>
</feature>
<feature type="coiled-coil region" evidence="2">
    <location>
        <begin position="75"/>
        <end position="194"/>
    </location>
</feature>
<gene>
    <name type="primary">thoc7</name>
</gene>
<dbReference type="EMBL" id="BC053810">
    <property type="protein sequence ID" value="AAH53810.1"/>
    <property type="molecule type" value="mRNA"/>
</dbReference>
<dbReference type="RefSeq" id="NP_001080651.1">
    <property type="nucleotide sequence ID" value="NM_001087182.2"/>
</dbReference>
<dbReference type="SMR" id="Q7SZ78"/>
<dbReference type="IntAct" id="Q7SZ78">
    <property type="interactions" value="1"/>
</dbReference>
<dbReference type="DNASU" id="380343"/>
<dbReference type="GeneID" id="380343"/>
<dbReference type="KEGG" id="xla:380343"/>
<dbReference type="AGR" id="Xenbase:XB-GENE-956295"/>
<dbReference type="CTD" id="380343"/>
<dbReference type="Xenbase" id="XB-GENE-956295">
    <property type="gene designation" value="thoc7.S"/>
</dbReference>
<dbReference type="OMA" id="WANSKND"/>
<dbReference type="OrthoDB" id="205166at2759"/>
<dbReference type="Proteomes" id="UP000186698">
    <property type="component" value="Chromosome 4S"/>
</dbReference>
<dbReference type="Bgee" id="380343">
    <property type="expression patterns" value="Expressed in egg cell and 19 other cell types or tissues"/>
</dbReference>
<dbReference type="GO" id="GO:0005737">
    <property type="term" value="C:cytoplasm"/>
    <property type="evidence" value="ECO:0000250"/>
    <property type="project" value="UniProtKB"/>
</dbReference>
<dbReference type="GO" id="GO:0016607">
    <property type="term" value="C:nuclear speck"/>
    <property type="evidence" value="ECO:0007669"/>
    <property type="project" value="UniProtKB-SubCell"/>
</dbReference>
<dbReference type="GO" id="GO:0005634">
    <property type="term" value="C:nucleus"/>
    <property type="evidence" value="ECO:0000250"/>
    <property type="project" value="UniProtKB"/>
</dbReference>
<dbReference type="GO" id="GO:0000445">
    <property type="term" value="C:THO complex part of transcription export complex"/>
    <property type="evidence" value="ECO:0000318"/>
    <property type="project" value="GO_Central"/>
</dbReference>
<dbReference type="GO" id="GO:0003723">
    <property type="term" value="F:RNA binding"/>
    <property type="evidence" value="ECO:0007669"/>
    <property type="project" value="UniProtKB-KW"/>
</dbReference>
<dbReference type="GO" id="GO:0006406">
    <property type="term" value="P:mRNA export from nucleus"/>
    <property type="evidence" value="ECO:0000318"/>
    <property type="project" value="GO_Central"/>
</dbReference>
<dbReference type="GO" id="GO:0006397">
    <property type="term" value="P:mRNA processing"/>
    <property type="evidence" value="ECO:0007669"/>
    <property type="project" value="UniProtKB-KW"/>
</dbReference>
<dbReference type="GO" id="GO:0008380">
    <property type="term" value="P:RNA splicing"/>
    <property type="evidence" value="ECO:0007669"/>
    <property type="project" value="UniProtKB-KW"/>
</dbReference>
<dbReference type="InterPro" id="IPR008501">
    <property type="entry name" value="THOC7/Mft1"/>
</dbReference>
<dbReference type="PANTHER" id="PTHR23405">
    <property type="entry name" value="MAINTENANCE OF KILLER 16 MAK16 PROTEIN-RELATED"/>
    <property type="match status" value="1"/>
</dbReference>
<dbReference type="PANTHER" id="PTHR23405:SF5">
    <property type="entry name" value="THO COMPLEX SUBUNIT 7 HOMOLOG"/>
    <property type="match status" value="1"/>
</dbReference>
<dbReference type="Pfam" id="PF05615">
    <property type="entry name" value="THOC7"/>
    <property type="match status" value="1"/>
</dbReference>
<comment type="function">
    <text evidence="1">Component of the THO subcomplex of the TREX complex which is thought to couple mRNA transcription, processing and nuclear export, and which specifically associates with spliced mRNA and not with unspliced pre-mRNA. Required for efficient export of polyadenylated RNA. Plays a key structural role in the oligomerization of the THO-DDX39B complex. TREX is recruited to spliced mRNAs by a transcription-independent mechanism, binds to mRNA upstream of the exon-junction complex (EJC) and is recruited in a splicing- and cap-dependent manner to a region near the 5' end of the mRNA where it functions in mRNA export to the cytoplasm via the TAP/NXF1 pathway.</text>
</comment>
<comment type="subunit">
    <text evidence="1">Component of the THO subcomplex, which is composed of thoc1, thoc2, thoc3, thoc5, thoc6 and thoc7. Component of the transcription/export (TREX) complex at least composed of alyref/thoc4, ddx39b, sarnp/cip29, chtop and the THO subcomplex.</text>
</comment>
<comment type="subcellular location">
    <subcellularLocation>
        <location evidence="1">Cytoplasm</location>
    </subcellularLocation>
    <subcellularLocation>
        <location evidence="1">Nucleus</location>
    </subcellularLocation>
    <subcellularLocation>
        <location evidence="1">Nucleus speckle</location>
    </subcellularLocation>
</comment>
<comment type="similarity">
    <text evidence="4">Belongs to the THOC7 family.</text>
</comment>
<name>THOC7_XENLA</name>
<keyword id="KW-0175">Coiled coil</keyword>
<keyword id="KW-0963">Cytoplasm</keyword>
<keyword id="KW-0507">mRNA processing</keyword>
<keyword id="KW-0508">mRNA splicing</keyword>
<keyword id="KW-0509">mRNA transport</keyword>
<keyword id="KW-0539">Nucleus</keyword>
<keyword id="KW-1185">Reference proteome</keyword>
<keyword id="KW-0694">RNA-binding</keyword>
<keyword id="KW-0813">Transport</keyword>
<evidence type="ECO:0000250" key="1">
    <source>
        <dbReference type="UniProtKB" id="Q6I9Y2"/>
    </source>
</evidence>
<evidence type="ECO:0000255" key="2"/>
<evidence type="ECO:0000256" key="3">
    <source>
        <dbReference type="SAM" id="MobiDB-lite"/>
    </source>
</evidence>
<evidence type="ECO:0000305" key="4"/>
<protein>
    <recommendedName>
        <fullName>THO complex subunit 7 homolog</fullName>
    </recommendedName>
</protein>
<accession>Q7SZ78</accession>
<organism>
    <name type="scientific">Xenopus laevis</name>
    <name type="common">African clawed frog</name>
    <dbReference type="NCBI Taxonomy" id="8355"/>
    <lineage>
        <taxon>Eukaryota</taxon>
        <taxon>Metazoa</taxon>
        <taxon>Chordata</taxon>
        <taxon>Craniata</taxon>
        <taxon>Vertebrata</taxon>
        <taxon>Euteleostomi</taxon>
        <taxon>Amphibia</taxon>
        <taxon>Batrachia</taxon>
        <taxon>Anura</taxon>
        <taxon>Pipoidea</taxon>
        <taxon>Pipidae</taxon>
        <taxon>Xenopodinae</taxon>
        <taxon>Xenopus</taxon>
        <taxon>Xenopus</taxon>
    </lineage>
</organism>